<organism>
    <name type="scientific">Chaetomium globosum (strain ATCC 6205 / CBS 148.51 / DSM 1962 / NBRC 6347 / NRRL 1970)</name>
    <name type="common">Soil fungus</name>
    <dbReference type="NCBI Taxonomy" id="306901"/>
    <lineage>
        <taxon>Eukaryota</taxon>
        <taxon>Fungi</taxon>
        <taxon>Dikarya</taxon>
        <taxon>Ascomycota</taxon>
        <taxon>Pezizomycotina</taxon>
        <taxon>Sordariomycetes</taxon>
        <taxon>Sordariomycetidae</taxon>
        <taxon>Sordariales</taxon>
        <taxon>Chaetomiaceae</taxon>
        <taxon>Chaetomium</taxon>
    </lineage>
</organism>
<reference key="1">
    <citation type="journal article" date="2015" name="Genome Announc.">
        <title>Draft genome sequence of the cellulolytic fungus Chaetomium globosum.</title>
        <authorList>
            <person name="Cuomo C.A."/>
            <person name="Untereiner W.A."/>
            <person name="Ma L.-J."/>
            <person name="Grabherr M."/>
            <person name="Birren B.W."/>
        </authorList>
    </citation>
    <scope>NUCLEOTIDE SEQUENCE [LARGE SCALE GENOMIC DNA]</scope>
    <source>
        <strain>ATCC 6205 / CBS 148.51 / DSM 1962 / NBRC 6347 / NRRL 1970</strain>
    </source>
</reference>
<sequence>MATVHSPIPALYTVYILRSTVRHASFYVGSTPNPPRRLSQHNGLVRGGAVRTSRGNLRPWEMIILVSGFPSATAALKFEWALNNPHLSMHIPSAERLVVSTQRNRNGRPRRPAKSLASVASSLHLLLRVPSFARWPLCVQFFNRDAFAAWEKWCAGVSLGERGLRESWKVVTDFGEGVTSGGSGEVAAAEGEDEAPAPWGIHALPLDYEPMKEYVAKGQEIFEFERQGRCVVCREEMKSGEGLHAVCTHEGCDGVGHISCWSRSFLKNNDTGSILPVQGQCPMCKEEVDWADMMKELTLRLRGQKEVDKLLKRKRKRATKKAKKT</sequence>
<keyword id="KW-0227">DNA damage</keyword>
<keyword id="KW-0233">DNA recombination</keyword>
<keyword id="KW-0234">DNA repair</keyword>
<keyword id="KW-0255">Endonuclease</keyword>
<keyword id="KW-0378">Hydrolase</keyword>
<keyword id="KW-0479">Metal-binding</keyword>
<keyword id="KW-0540">Nuclease</keyword>
<keyword id="KW-0539">Nucleus</keyword>
<keyword id="KW-1185">Reference proteome</keyword>
<keyword id="KW-0862">Zinc</keyword>
<keyword id="KW-0863">Zinc-finger</keyword>
<proteinExistence type="inferred from homology"/>
<evidence type="ECO:0000255" key="1">
    <source>
        <dbReference type="HAMAP-Rule" id="MF_03100"/>
    </source>
</evidence>
<feature type="chain" id="PRO_0000383781" description="Structure-specific endonuclease subunit SLX1">
    <location>
        <begin position="1"/>
        <end position="325"/>
    </location>
</feature>
<feature type="domain" description="GIY-YIG" evidence="1">
    <location>
        <begin position="10"/>
        <end position="92"/>
    </location>
</feature>
<feature type="zinc finger region" description="SLX1-type" evidence="1">
    <location>
        <begin position="230"/>
        <end position="284"/>
    </location>
</feature>
<protein>
    <recommendedName>
        <fullName evidence="1">Structure-specific endonuclease subunit SLX1</fullName>
        <ecNumber evidence="1">3.1.-.-</ecNumber>
    </recommendedName>
</protein>
<name>SLX1_CHAGB</name>
<gene>
    <name evidence="1" type="primary">SLX1</name>
    <name type="ORF">CHGG_07657</name>
</gene>
<comment type="function">
    <text evidence="1">Catalytic subunit of the SLX1-SLX4 structure-specific endonuclease that resolves DNA secondary structures generated during DNA repair and recombination. Has endonuclease activity towards branched DNA substrates, introducing single-strand cuts in duplex DNA close to junctions with ss-DNA.</text>
</comment>
<comment type="cofactor">
    <cofactor evidence="1">
        <name>a divalent metal cation</name>
        <dbReference type="ChEBI" id="CHEBI:60240"/>
    </cofactor>
</comment>
<comment type="subunit">
    <text evidence="1">Forms a heterodimer with SLX4.</text>
</comment>
<comment type="subcellular location">
    <subcellularLocation>
        <location evidence="1">Nucleus</location>
    </subcellularLocation>
</comment>
<comment type="similarity">
    <text evidence="1">Belongs to the SLX1 family.</text>
</comment>
<accession>Q2GWJ7</accession>
<dbReference type="EC" id="3.1.-.-" evidence="1"/>
<dbReference type="EMBL" id="CH408033">
    <property type="protein sequence ID" value="EAQ86404.1"/>
    <property type="molecule type" value="Genomic_DNA"/>
</dbReference>
<dbReference type="RefSeq" id="XP_001225313.1">
    <property type="nucleotide sequence ID" value="XM_001225312.1"/>
</dbReference>
<dbReference type="SMR" id="Q2GWJ7"/>
<dbReference type="FunCoup" id="Q2GWJ7">
    <property type="interactions" value="344"/>
</dbReference>
<dbReference type="STRING" id="306901.Q2GWJ7"/>
<dbReference type="GeneID" id="4393923"/>
<dbReference type="VEuPathDB" id="FungiDB:CHGG_07657"/>
<dbReference type="eggNOG" id="KOG3005">
    <property type="taxonomic scope" value="Eukaryota"/>
</dbReference>
<dbReference type="HOGENOM" id="CLU_030739_1_1_1"/>
<dbReference type="InParanoid" id="Q2GWJ7"/>
<dbReference type="OMA" id="HNRGCDF"/>
<dbReference type="OrthoDB" id="24645at2759"/>
<dbReference type="Proteomes" id="UP000001056">
    <property type="component" value="Unassembled WGS sequence"/>
</dbReference>
<dbReference type="GO" id="GO:0033557">
    <property type="term" value="C:Slx1-Slx4 complex"/>
    <property type="evidence" value="ECO:0007669"/>
    <property type="project" value="UniProtKB-UniRule"/>
</dbReference>
<dbReference type="GO" id="GO:0017108">
    <property type="term" value="F:5'-flap endonuclease activity"/>
    <property type="evidence" value="ECO:0007669"/>
    <property type="project" value="InterPro"/>
</dbReference>
<dbReference type="GO" id="GO:0008821">
    <property type="term" value="F:crossover junction DNA endonuclease activity"/>
    <property type="evidence" value="ECO:0007669"/>
    <property type="project" value="TreeGrafter"/>
</dbReference>
<dbReference type="GO" id="GO:0008270">
    <property type="term" value="F:zinc ion binding"/>
    <property type="evidence" value="ECO:0007669"/>
    <property type="project" value="UniProtKB-KW"/>
</dbReference>
<dbReference type="GO" id="GO:0000724">
    <property type="term" value="P:double-strand break repair via homologous recombination"/>
    <property type="evidence" value="ECO:0007669"/>
    <property type="project" value="TreeGrafter"/>
</dbReference>
<dbReference type="CDD" id="cd10455">
    <property type="entry name" value="GIY-YIG_SLX1"/>
    <property type="match status" value="1"/>
</dbReference>
<dbReference type="CDD" id="cd16448">
    <property type="entry name" value="RING-H2"/>
    <property type="match status" value="1"/>
</dbReference>
<dbReference type="Gene3D" id="3.40.1440.10">
    <property type="entry name" value="GIY-YIG endonuclease"/>
    <property type="match status" value="1"/>
</dbReference>
<dbReference type="Gene3D" id="3.30.40.10">
    <property type="entry name" value="Zinc/RING finger domain, C3HC4 (zinc finger)"/>
    <property type="match status" value="1"/>
</dbReference>
<dbReference type="HAMAP" id="MF_03100">
    <property type="entry name" value="Endonuc_su_Slx1"/>
    <property type="match status" value="1"/>
</dbReference>
<dbReference type="InterPro" id="IPR000305">
    <property type="entry name" value="GIY-YIG_endonuc"/>
</dbReference>
<dbReference type="InterPro" id="IPR035901">
    <property type="entry name" value="GIY-YIG_endonuc_sf"/>
</dbReference>
<dbReference type="InterPro" id="IPR027520">
    <property type="entry name" value="Slx1"/>
</dbReference>
<dbReference type="InterPro" id="IPR048749">
    <property type="entry name" value="SLX1_C"/>
</dbReference>
<dbReference type="InterPro" id="IPR050381">
    <property type="entry name" value="SLX1_endonuclease"/>
</dbReference>
<dbReference type="InterPro" id="IPR013083">
    <property type="entry name" value="Znf_RING/FYVE/PHD"/>
</dbReference>
<dbReference type="PANTHER" id="PTHR20208">
    <property type="entry name" value="STRUCTURE-SPECIFIC ENDONUCLEASE SUBUNIT SLX1"/>
    <property type="match status" value="1"/>
</dbReference>
<dbReference type="PANTHER" id="PTHR20208:SF10">
    <property type="entry name" value="STRUCTURE-SPECIFIC ENDONUCLEASE SUBUNIT SLX1"/>
    <property type="match status" value="1"/>
</dbReference>
<dbReference type="Pfam" id="PF01541">
    <property type="entry name" value="GIY-YIG"/>
    <property type="match status" value="1"/>
</dbReference>
<dbReference type="Pfam" id="PF21202">
    <property type="entry name" value="SLX1_C"/>
    <property type="match status" value="1"/>
</dbReference>
<dbReference type="PROSITE" id="PS50164">
    <property type="entry name" value="GIY_YIG"/>
    <property type="match status" value="1"/>
</dbReference>